<organism>
    <name type="scientific">Helicobacter acinonychis (strain Sheeba)</name>
    <dbReference type="NCBI Taxonomy" id="382638"/>
    <lineage>
        <taxon>Bacteria</taxon>
        <taxon>Pseudomonadati</taxon>
        <taxon>Campylobacterota</taxon>
        <taxon>Epsilonproteobacteria</taxon>
        <taxon>Campylobacterales</taxon>
        <taxon>Helicobacteraceae</taxon>
        <taxon>Helicobacter</taxon>
    </lineage>
</organism>
<name>RLMH_HELAH</name>
<evidence type="ECO:0000255" key="1">
    <source>
        <dbReference type="HAMAP-Rule" id="MF_00658"/>
    </source>
</evidence>
<sequence length="150" mass="17326">MRCVVYSIAKSSPLELVKIYQKQCKQFGCELELVDLFPKNIANAQKISKELAQKSYSLAFEPYLNPKAINIALHPKAERGDSFAFSKMLENYLNINFFIAGAYGFEEKFLKDCQAWSLSEMTFSHEVAKIVLCEQIYRALSIIFRHPYHK</sequence>
<keyword id="KW-0963">Cytoplasm</keyword>
<keyword id="KW-0489">Methyltransferase</keyword>
<keyword id="KW-0698">rRNA processing</keyword>
<keyword id="KW-0949">S-adenosyl-L-methionine</keyword>
<keyword id="KW-0808">Transferase</keyword>
<accession>Q17X37</accession>
<proteinExistence type="inferred from homology"/>
<protein>
    <recommendedName>
        <fullName evidence="1">Ribosomal RNA large subunit methyltransferase H</fullName>
        <ecNumber evidence="1">2.1.1.177</ecNumber>
    </recommendedName>
    <alternativeName>
        <fullName evidence="1">23S rRNA (pseudouridine1915-N3)-methyltransferase</fullName>
    </alternativeName>
    <alternativeName>
        <fullName evidence="1">23S rRNA m3Psi1915 methyltransferase</fullName>
    </alternativeName>
    <alternativeName>
        <fullName evidence="1">rRNA (pseudouridine-N3-)-methyltransferase RlmH</fullName>
    </alternativeName>
</protein>
<reference key="1">
    <citation type="journal article" date="2006" name="PLoS Genet.">
        <title>Who ate whom? Adaptive Helicobacter genomic changes that accompanied a host jump from early humans to large felines.</title>
        <authorList>
            <person name="Eppinger M."/>
            <person name="Baar C."/>
            <person name="Linz B."/>
            <person name="Raddatz G."/>
            <person name="Lanz C."/>
            <person name="Keller H."/>
            <person name="Morelli G."/>
            <person name="Gressmann H."/>
            <person name="Achtman M."/>
            <person name="Schuster S.C."/>
        </authorList>
    </citation>
    <scope>NUCLEOTIDE SEQUENCE [LARGE SCALE GENOMIC DNA]</scope>
    <source>
        <strain>Sheeba</strain>
    </source>
</reference>
<dbReference type="EC" id="2.1.1.177" evidence="1"/>
<dbReference type="EMBL" id="AM260522">
    <property type="protein sequence ID" value="CAJ99789.1"/>
    <property type="molecule type" value="Genomic_DNA"/>
</dbReference>
<dbReference type="RefSeq" id="WP_011577899.1">
    <property type="nucleotide sequence ID" value="NC_008229.1"/>
</dbReference>
<dbReference type="SMR" id="Q17X37"/>
<dbReference type="STRING" id="382638.Hac_1025"/>
<dbReference type="GeneID" id="31758398"/>
<dbReference type="KEGG" id="hac:Hac_1025"/>
<dbReference type="eggNOG" id="COG1576">
    <property type="taxonomic scope" value="Bacteria"/>
</dbReference>
<dbReference type="HOGENOM" id="CLU_100552_2_1_7"/>
<dbReference type="OrthoDB" id="9806643at2"/>
<dbReference type="BioCyc" id="HACI382638:HAC_RS04390-MONOMER"/>
<dbReference type="Proteomes" id="UP000000775">
    <property type="component" value="Chromosome"/>
</dbReference>
<dbReference type="GO" id="GO:0005737">
    <property type="term" value="C:cytoplasm"/>
    <property type="evidence" value="ECO:0007669"/>
    <property type="project" value="UniProtKB-SubCell"/>
</dbReference>
<dbReference type="GO" id="GO:0070038">
    <property type="term" value="F:rRNA (pseudouridine-N3-)-methyltransferase activity"/>
    <property type="evidence" value="ECO:0007669"/>
    <property type="project" value="UniProtKB-UniRule"/>
</dbReference>
<dbReference type="CDD" id="cd18081">
    <property type="entry name" value="RlmH-like"/>
    <property type="match status" value="1"/>
</dbReference>
<dbReference type="Gene3D" id="3.40.1280.10">
    <property type="match status" value="1"/>
</dbReference>
<dbReference type="HAMAP" id="MF_00658">
    <property type="entry name" value="23SrRNA_methyltr_H"/>
    <property type="match status" value="1"/>
</dbReference>
<dbReference type="InterPro" id="IPR029028">
    <property type="entry name" value="Alpha/beta_knot_MTases"/>
</dbReference>
<dbReference type="InterPro" id="IPR003742">
    <property type="entry name" value="RlmH-like"/>
</dbReference>
<dbReference type="InterPro" id="IPR029026">
    <property type="entry name" value="tRNA_m1G_MTases_N"/>
</dbReference>
<dbReference type="NCBIfam" id="NF000987">
    <property type="entry name" value="PRK00103.2-1"/>
    <property type="match status" value="1"/>
</dbReference>
<dbReference type="PANTHER" id="PTHR33603">
    <property type="entry name" value="METHYLTRANSFERASE"/>
    <property type="match status" value="1"/>
</dbReference>
<dbReference type="PANTHER" id="PTHR33603:SF1">
    <property type="entry name" value="RIBOSOMAL RNA LARGE SUBUNIT METHYLTRANSFERASE H"/>
    <property type="match status" value="1"/>
</dbReference>
<dbReference type="Pfam" id="PF02590">
    <property type="entry name" value="SPOUT_MTase"/>
    <property type="match status" value="1"/>
</dbReference>
<dbReference type="PIRSF" id="PIRSF004505">
    <property type="entry name" value="MT_bac"/>
    <property type="match status" value="1"/>
</dbReference>
<dbReference type="SUPFAM" id="SSF75217">
    <property type="entry name" value="alpha/beta knot"/>
    <property type="match status" value="1"/>
</dbReference>
<comment type="function">
    <text evidence="1">Specifically methylates the pseudouridine at position 1915 (m3Psi1915) in 23S rRNA.</text>
</comment>
<comment type="catalytic activity">
    <reaction evidence="1">
        <text>pseudouridine(1915) in 23S rRNA + S-adenosyl-L-methionine = N(3)-methylpseudouridine(1915) in 23S rRNA + S-adenosyl-L-homocysteine + H(+)</text>
        <dbReference type="Rhea" id="RHEA:42752"/>
        <dbReference type="Rhea" id="RHEA-COMP:10221"/>
        <dbReference type="Rhea" id="RHEA-COMP:10222"/>
        <dbReference type="ChEBI" id="CHEBI:15378"/>
        <dbReference type="ChEBI" id="CHEBI:57856"/>
        <dbReference type="ChEBI" id="CHEBI:59789"/>
        <dbReference type="ChEBI" id="CHEBI:65314"/>
        <dbReference type="ChEBI" id="CHEBI:74486"/>
        <dbReference type="EC" id="2.1.1.177"/>
    </reaction>
</comment>
<comment type="subunit">
    <text evidence="1">Homodimer.</text>
</comment>
<comment type="subcellular location">
    <subcellularLocation>
        <location evidence="1">Cytoplasm</location>
    </subcellularLocation>
</comment>
<comment type="similarity">
    <text evidence="1">Belongs to the RNA methyltransferase RlmH family.</text>
</comment>
<gene>
    <name evidence="1" type="primary">rlmH</name>
    <name type="ordered locus">Hac_1025</name>
</gene>
<feature type="chain" id="PRO_0000366604" description="Ribosomal RNA large subunit methyltransferase H">
    <location>
        <begin position="1"/>
        <end position="150"/>
    </location>
</feature>
<feature type="binding site" evidence="1">
    <location>
        <position position="71"/>
    </location>
    <ligand>
        <name>S-adenosyl-L-methionine</name>
        <dbReference type="ChEBI" id="CHEBI:59789"/>
    </ligand>
</feature>
<feature type="binding site" evidence="1">
    <location>
        <position position="100"/>
    </location>
    <ligand>
        <name>S-adenosyl-L-methionine</name>
        <dbReference type="ChEBI" id="CHEBI:59789"/>
    </ligand>
</feature>
<feature type="binding site" evidence="1">
    <location>
        <begin position="118"/>
        <end position="123"/>
    </location>
    <ligand>
        <name>S-adenosyl-L-methionine</name>
        <dbReference type="ChEBI" id="CHEBI:59789"/>
    </ligand>
</feature>